<evidence type="ECO:0000250" key="1"/>
<evidence type="ECO:0000255" key="2"/>
<evidence type="ECO:0000255" key="3">
    <source>
        <dbReference type="PROSITE-ProRule" id="PRU01240"/>
    </source>
</evidence>
<evidence type="ECO:0000269" key="4">
    <source>
    </source>
</evidence>
<evidence type="ECO:0000269" key="5">
    <source>
    </source>
</evidence>
<evidence type="ECO:0000305" key="6"/>
<accession>D4APA9</accession>
<organism>
    <name type="scientific">Arthroderma benhamiae (strain ATCC MYA-4681 / CBS 112371)</name>
    <name type="common">Trichophyton mentagrophytes</name>
    <dbReference type="NCBI Taxonomy" id="663331"/>
    <lineage>
        <taxon>Eukaryota</taxon>
        <taxon>Fungi</taxon>
        <taxon>Dikarya</taxon>
        <taxon>Ascomycota</taxon>
        <taxon>Pezizomycotina</taxon>
        <taxon>Eurotiomycetes</taxon>
        <taxon>Eurotiomycetidae</taxon>
        <taxon>Onygenales</taxon>
        <taxon>Arthrodermataceae</taxon>
        <taxon>Trichophyton</taxon>
    </lineage>
</organism>
<keyword id="KW-0325">Glycoprotein</keyword>
<keyword id="KW-0378">Hydrolase</keyword>
<keyword id="KW-0645">Protease</keyword>
<keyword id="KW-1185">Reference proteome</keyword>
<keyword id="KW-0964">Secreted</keyword>
<keyword id="KW-0720">Serine protease</keyword>
<keyword id="KW-0732">Signal</keyword>
<keyword id="KW-0843">Virulence</keyword>
<keyword id="KW-0865">Zymogen</keyword>
<reference key="1">
    <citation type="journal article" date="2011" name="Genome Biol.">
        <title>Comparative and functional genomics provide insights into the pathogenicity of dermatophytic fungi.</title>
        <authorList>
            <person name="Burmester A."/>
            <person name="Shelest E."/>
            <person name="Gloeckner G."/>
            <person name="Heddergott C."/>
            <person name="Schindler S."/>
            <person name="Staib P."/>
            <person name="Heidel A."/>
            <person name="Felder M."/>
            <person name="Petzold A."/>
            <person name="Szafranski K."/>
            <person name="Feuermann M."/>
            <person name="Pedruzzi I."/>
            <person name="Priebe S."/>
            <person name="Groth M."/>
            <person name="Winkler R."/>
            <person name="Li W."/>
            <person name="Kniemeyer O."/>
            <person name="Schroeckh V."/>
            <person name="Hertweck C."/>
            <person name="Hube B."/>
            <person name="White T.C."/>
            <person name="Platzer M."/>
            <person name="Guthke R."/>
            <person name="Heitman J."/>
            <person name="Woestemeyer J."/>
            <person name="Zipfel P.F."/>
            <person name="Monod M."/>
            <person name="Brakhage A.A."/>
        </authorList>
    </citation>
    <scope>NUCLEOTIDE SEQUENCE [LARGE SCALE GENOMIC DNA]</scope>
    <scope>IDENTIFICATION BY MASS SPECTROMETRY</scope>
    <scope>SUBCELLULAR LOCATION</scope>
    <source>
        <strain>ATCC MYA-4681 / CBS 112371</strain>
    </source>
</reference>
<reference key="2">
    <citation type="journal article" date="2010" name="Microbiology">
        <title>Differential gene expression in the pathogenic dermatophyte Arthroderma benhamiae in vitro versus during infection.</title>
        <authorList>
            <person name="Staib P."/>
            <person name="Zaugg C."/>
            <person name="Mignon B."/>
            <person name="Weber J."/>
            <person name="Grumbt M."/>
            <person name="Pradervand S."/>
            <person name="Harshman K."/>
            <person name="Monod M."/>
        </authorList>
    </citation>
    <scope>INDUCTION</scope>
</reference>
<comment type="function">
    <text evidence="1">Secreted subtilisin-like serine protease with keratinolytic activity that contributes to pathogenicity.</text>
</comment>
<comment type="subcellular location">
    <subcellularLocation>
        <location evidence="5">Secreted</location>
    </subcellularLocation>
</comment>
<comment type="induction">
    <text evidence="4">Expression is up-regulated during infection.</text>
</comment>
<comment type="similarity">
    <text evidence="6">Belongs to the peptidase S8 family.</text>
</comment>
<comment type="sequence caution" evidence="6">
    <conflict type="erroneous gene model prediction">
        <sequence resource="EMBL-CDS" id="EFE35120"/>
    </conflict>
</comment>
<protein>
    <recommendedName>
        <fullName>Subtilisin-like protease 7</fullName>
        <ecNumber>3.4.21.-</ecNumber>
    </recommendedName>
</protein>
<proteinExistence type="evidence at protein level"/>
<gene>
    <name type="primary">SUB7</name>
    <name type="ORF">ARB_06076</name>
</gene>
<dbReference type="EC" id="3.4.21.-"/>
<dbReference type="EMBL" id="ABSU01000004">
    <property type="protein sequence ID" value="EFE35120.1"/>
    <property type="status" value="ALT_SEQ"/>
    <property type="molecule type" value="Genomic_DNA"/>
</dbReference>
<dbReference type="RefSeq" id="XP_003015765.1">
    <property type="nucleotide sequence ID" value="XM_003015719.1"/>
</dbReference>
<dbReference type="SMR" id="D4APA9"/>
<dbReference type="GlyCosmos" id="D4APA9">
    <property type="glycosylation" value="3 sites, No reported glycans"/>
</dbReference>
<dbReference type="GeneID" id="9526046"/>
<dbReference type="KEGG" id="abe:ARB_06076"/>
<dbReference type="eggNOG" id="KOG1153">
    <property type="taxonomic scope" value="Eukaryota"/>
</dbReference>
<dbReference type="HOGENOM" id="CLU_011263_1_3_1"/>
<dbReference type="OrthoDB" id="206201at2759"/>
<dbReference type="Proteomes" id="UP000008866">
    <property type="component" value="Unassembled WGS sequence"/>
</dbReference>
<dbReference type="GO" id="GO:0005576">
    <property type="term" value="C:extracellular region"/>
    <property type="evidence" value="ECO:0007669"/>
    <property type="project" value="UniProtKB-SubCell"/>
</dbReference>
<dbReference type="GO" id="GO:0004252">
    <property type="term" value="F:serine-type endopeptidase activity"/>
    <property type="evidence" value="ECO:0007669"/>
    <property type="project" value="InterPro"/>
</dbReference>
<dbReference type="GO" id="GO:0006508">
    <property type="term" value="P:proteolysis"/>
    <property type="evidence" value="ECO:0007669"/>
    <property type="project" value="UniProtKB-KW"/>
</dbReference>
<dbReference type="CDD" id="cd04077">
    <property type="entry name" value="Peptidases_S8_PCSK9_ProteinaseK_like"/>
    <property type="match status" value="1"/>
</dbReference>
<dbReference type="FunFam" id="3.40.50.200:FF:000014">
    <property type="entry name" value="Proteinase K"/>
    <property type="match status" value="1"/>
</dbReference>
<dbReference type="Gene3D" id="3.30.70.80">
    <property type="entry name" value="Peptidase S8 propeptide/proteinase inhibitor I9"/>
    <property type="match status" value="1"/>
</dbReference>
<dbReference type="Gene3D" id="3.40.50.200">
    <property type="entry name" value="Peptidase S8/S53 domain"/>
    <property type="match status" value="1"/>
</dbReference>
<dbReference type="InterPro" id="IPR034193">
    <property type="entry name" value="PCSK9_ProteinaseK-like"/>
</dbReference>
<dbReference type="InterPro" id="IPR000209">
    <property type="entry name" value="Peptidase_S8/S53_dom"/>
</dbReference>
<dbReference type="InterPro" id="IPR036852">
    <property type="entry name" value="Peptidase_S8/S53_dom_sf"/>
</dbReference>
<dbReference type="InterPro" id="IPR022398">
    <property type="entry name" value="Peptidase_S8_His-AS"/>
</dbReference>
<dbReference type="InterPro" id="IPR023828">
    <property type="entry name" value="Peptidase_S8_Ser-AS"/>
</dbReference>
<dbReference type="InterPro" id="IPR050131">
    <property type="entry name" value="Peptidase_S8_subtilisin-like"/>
</dbReference>
<dbReference type="InterPro" id="IPR015500">
    <property type="entry name" value="Peptidase_S8_subtilisin-rel"/>
</dbReference>
<dbReference type="InterPro" id="IPR010259">
    <property type="entry name" value="S8pro/Inhibitor_I9"/>
</dbReference>
<dbReference type="InterPro" id="IPR037045">
    <property type="entry name" value="S8pro/Inhibitor_I9_sf"/>
</dbReference>
<dbReference type="PANTHER" id="PTHR43806:SF11">
    <property type="entry name" value="CEREVISIN-RELATED"/>
    <property type="match status" value="1"/>
</dbReference>
<dbReference type="PANTHER" id="PTHR43806">
    <property type="entry name" value="PEPTIDASE S8"/>
    <property type="match status" value="1"/>
</dbReference>
<dbReference type="Pfam" id="PF05922">
    <property type="entry name" value="Inhibitor_I9"/>
    <property type="match status" value="1"/>
</dbReference>
<dbReference type="Pfam" id="PF00082">
    <property type="entry name" value="Peptidase_S8"/>
    <property type="match status" value="1"/>
</dbReference>
<dbReference type="PRINTS" id="PR00723">
    <property type="entry name" value="SUBTILISIN"/>
</dbReference>
<dbReference type="SUPFAM" id="SSF54897">
    <property type="entry name" value="Protease propeptides/inhibitors"/>
    <property type="match status" value="1"/>
</dbReference>
<dbReference type="SUPFAM" id="SSF52743">
    <property type="entry name" value="Subtilisin-like"/>
    <property type="match status" value="1"/>
</dbReference>
<dbReference type="PROSITE" id="PS51892">
    <property type="entry name" value="SUBTILASE"/>
    <property type="match status" value="1"/>
</dbReference>
<dbReference type="PROSITE" id="PS00137">
    <property type="entry name" value="SUBTILASE_HIS"/>
    <property type="match status" value="1"/>
</dbReference>
<dbReference type="PROSITE" id="PS00138">
    <property type="entry name" value="SUBTILASE_SER"/>
    <property type="match status" value="1"/>
</dbReference>
<feature type="signal peptide" evidence="2">
    <location>
        <begin position="1"/>
        <end position="20"/>
    </location>
</feature>
<feature type="propeptide" id="PRO_0000397804" evidence="1">
    <location>
        <begin position="21"/>
        <end position="119"/>
    </location>
</feature>
<feature type="chain" id="PRO_0000397805" description="Subtilisin-like protease 7">
    <location>
        <begin position="120"/>
        <end position="420"/>
    </location>
</feature>
<feature type="domain" description="Inhibitor I9" evidence="2">
    <location>
        <begin position="36"/>
        <end position="118"/>
    </location>
</feature>
<feature type="domain" description="Peptidase S8" evidence="3">
    <location>
        <begin position="129"/>
        <end position="413"/>
    </location>
</feature>
<feature type="active site" description="Charge relay system" evidence="3">
    <location>
        <position position="161"/>
    </location>
</feature>
<feature type="active site" description="Charge relay system" evidence="3">
    <location>
        <position position="192"/>
    </location>
</feature>
<feature type="active site" description="Charge relay system" evidence="3">
    <location>
        <position position="346"/>
    </location>
</feature>
<feature type="glycosylation site" description="N-linked (GlcNAc...) asparagine" evidence="2">
    <location>
        <position position="222"/>
    </location>
</feature>
<feature type="glycosylation site" description="N-linked (GlcNAc...) asparagine" evidence="2">
    <location>
        <position position="252"/>
    </location>
</feature>
<feature type="glycosylation site" description="N-linked (GlcNAc...) asparagine" evidence="2">
    <location>
        <position position="396"/>
    </location>
</feature>
<name>SUB7_ARTBC</name>
<sequence>MGFITKAIPLALAAASVINGAEIMETRAGVQTLADKYIVVMNDGMTDKDFDSHRSWVNRTHRRRLIRRGAKAMGGMKHTYRFPTGLKGYSGHFDEQMINEISKRADVKYIERDARVQINAIEQQDNVPSWGLARVGSKEPGGTTYYYDGTAGEGSTAYVIDTGTDIQHEEFEGRATWGANFVDDMDMDCNGHGTHVSGTIGGKTFGVAKKSNVVAVKVLDCNGSGSNSGVIMGMEWATKDAQQKGADKAVANMSLGGAFSQASNDAAAAIAKGGVFLAVAAGNDNVDAADSSPASEPSICTVAASTEQDSKADFSNFGQVVDVYAPGDSITSAKPGGGSQVLSGTSMATPHVAGLGAYLIGLGKGGGPGLCDTIKQTAIDVIQNPGASTTSKLINNGSGIGFLSFPLNIYEEQWSKLFDL</sequence>